<proteinExistence type="evidence at protein level"/>
<name>OMP2B_BRUAB</name>
<dbReference type="EMBL" id="U26438">
    <property type="protein sequence ID" value="AAA67784.1"/>
    <property type="status" value="ALT_INIT"/>
    <property type="molecule type" value="Genomic_DNA"/>
</dbReference>
<dbReference type="EMBL" id="AF268033">
    <property type="protein sequence ID" value="AAF80104.1"/>
    <property type="molecule type" value="Genomic_DNA"/>
</dbReference>
<dbReference type="EMBL" id="AE017223">
    <property type="protein sequence ID" value="AAX74032.1"/>
    <property type="status" value="ALT_INIT"/>
    <property type="molecule type" value="Genomic_DNA"/>
</dbReference>
<dbReference type="RefSeq" id="WP_002971512.1">
    <property type="nucleotide sequence ID" value="NC_006932.1"/>
</dbReference>
<dbReference type="SMR" id="Q44619"/>
<dbReference type="EnsemblBacteria" id="AAX74032">
    <property type="protein sequence ID" value="AAX74032"/>
    <property type="gene ID" value="BruAb1_0657"/>
</dbReference>
<dbReference type="KEGG" id="bmb:BruAb1_0657"/>
<dbReference type="HOGENOM" id="CLU_044836_0_0_5"/>
<dbReference type="Proteomes" id="UP000000540">
    <property type="component" value="Chromosome I"/>
</dbReference>
<dbReference type="GO" id="GO:0009279">
    <property type="term" value="C:cell outer membrane"/>
    <property type="evidence" value="ECO:0007669"/>
    <property type="project" value="UniProtKB-SubCell"/>
</dbReference>
<dbReference type="GO" id="GO:0046930">
    <property type="term" value="C:pore complex"/>
    <property type="evidence" value="ECO:0007669"/>
    <property type="project" value="UniProtKB-KW"/>
</dbReference>
<dbReference type="GO" id="GO:0015288">
    <property type="term" value="F:porin activity"/>
    <property type="evidence" value="ECO:0007669"/>
    <property type="project" value="UniProtKB-KW"/>
</dbReference>
<dbReference type="GO" id="GO:0006811">
    <property type="term" value="P:monoatomic ion transport"/>
    <property type="evidence" value="ECO:0007669"/>
    <property type="project" value="UniProtKB-KW"/>
</dbReference>
<dbReference type="InterPro" id="IPR003684">
    <property type="entry name" value="Porin_alphabac"/>
</dbReference>
<dbReference type="Pfam" id="PF02530">
    <property type="entry name" value="Porin_2"/>
    <property type="match status" value="1"/>
</dbReference>
<dbReference type="SUPFAM" id="SSF56935">
    <property type="entry name" value="Porins"/>
    <property type="match status" value="1"/>
</dbReference>
<protein>
    <recommendedName>
        <fullName>Porin Omp2b</fullName>
    </recommendedName>
</protein>
<gene>
    <name type="primary">omp2b</name>
    <name type="ordered locus">BruAb1_0657</name>
</gene>
<reference key="1">
    <citation type="journal article" date="1996" name="Int. J. Syst. Bacteriol.">
        <title>Species-specific sequences at the omp2 locus of Brucella type strains.</title>
        <authorList>
            <person name="Ficht T.A."/>
            <person name="Husseinen H.S."/>
            <person name="Derr J."/>
            <person name="Bearden S.W."/>
        </authorList>
    </citation>
    <scope>NUCLEOTIDE SEQUENCE [GENOMIC DNA]</scope>
    <source>
        <strain>biovar 5</strain>
    </source>
</reference>
<reference key="2">
    <citation type="journal article" date="2001" name="J. Bacteriol.">
        <title>Molecular, antigenic, and functional analyses of Omp2b porin size variants of Brucella spp.</title>
        <authorList>
            <person name="Paquet J.-Y."/>
            <person name="Diaz M.A."/>
            <person name="Genevrois S."/>
            <person name="Grayon M."/>
            <person name="Verger J.-M."/>
            <person name="de Bolle X."/>
            <person name="Lakey J.H."/>
            <person name="Letesson J.-J."/>
            <person name="Cloeckaert A."/>
        </authorList>
    </citation>
    <scope>NUCLEOTIDE SEQUENCE [GENOMIC DNA]</scope>
    <scope>FUNCTION IN PERMEABILITY TO SUGAR</scope>
    <source>
        <strain>45/20</strain>
    </source>
</reference>
<reference key="3">
    <citation type="journal article" date="2005" name="J. Bacteriol.">
        <title>Completion of the genome sequence of Brucella abortus and comparison to the highly similar genomes of Brucella melitensis and Brucella suis.</title>
        <authorList>
            <person name="Halling S.M."/>
            <person name="Peterson-Burch B.D."/>
            <person name="Bricker B.J."/>
            <person name="Zuerner R.L."/>
            <person name="Qing Z."/>
            <person name="Li L.-L."/>
            <person name="Kapur V."/>
            <person name="Alt D.P."/>
            <person name="Olsen S.C."/>
        </authorList>
    </citation>
    <scope>NUCLEOTIDE SEQUENCE [LARGE SCALE GENOMIC DNA]</scope>
    <source>
        <strain>9-941</strain>
    </source>
</reference>
<feature type="signal peptide" evidence="2">
    <location>
        <begin position="1"/>
        <end position="22"/>
    </location>
</feature>
<feature type="chain" id="PRO_5000143209" description="Porin Omp2b">
    <location>
        <begin position="23"/>
        <end position="362"/>
    </location>
</feature>
<feature type="sequence variant" description="In strain: 45/20.">
    <original>DNDGGYTGTTNYH</original>
    <variation>EDVDNDYT</variation>
    <location>
        <begin position="200"/>
        <end position="212"/>
    </location>
</feature>
<feature type="sequence variant" description="In strain: 45/20.">
    <original>D</original>
    <variation>H</variation>
    <location>
        <position position="219"/>
    </location>
</feature>
<organism>
    <name type="scientific">Brucella abortus biovar 1 (strain 9-941)</name>
    <dbReference type="NCBI Taxonomy" id="262698"/>
    <lineage>
        <taxon>Bacteria</taxon>
        <taxon>Pseudomonadati</taxon>
        <taxon>Pseudomonadota</taxon>
        <taxon>Alphaproteobacteria</taxon>
        <taxon>Hyphomicrobiales</taxon>
        <taxon>Brucellaceae</taxon>
        <taxon>Brucella/Ochrobactrum group</taxon>
        <taxon>Brucella</taxon>
    </lineage>
</organism>
<sequence length="362" mass="38723">MNIKSLLLGSAAALVAASGAQAADAIVAPEPEAVEYVRVCDAYGAGYFYIPGTETCLRVHGYVRYDVKGGDDVYSGTDRNGWDKSARFALRVSTGSETELGTLKTFTELRFNYAANNSGVDGKYGNETSSGTVMEFAYIQLGGLRVGIDESEFHTFTGYLGDVINDDVISAGSYRTGKISYTFTGGNGFSAVIALEQGGDNDGGYTGTTNYHIDGYMPDVVGGLKYAGGWGSIAGVVAYDSVIEEWAAKVRGDVNITDQFSVWLQGAYSSAATPDQNYGQWGGDWAVWGGLKYQATQKAAFNLQAAHDDWGKTAVTANVAYELVPGFTVTPEVSYTKFGGEWKNTVAEDNAWGGIVRFQRSF</sequence>
<accession>Q44619</accession>
<accession>Q57EA2</accession>
<accession>Q9KH75</accession>
<keyword id="KW-0998">Cell outer membrane</keyword>
<keyword id="KW-0406">Ion transport</keyword>
<keyword id="KW-0472">Membrane</keyword>
<keyword id="KW-0626">Porin</keyword>
<keyword id="KW-0732">Signal</keyword>
<keyword id="KW-0812">Transmembrane</keyword>
<keyword id="KW-1134">Transmembrane beta strand</keyword>
<keyword id="KW-0813">Transport</keyword>
<comment type="function">
    <text evidence="3">Forms passive diffusion pores that allow small molecular weight hydrophilic materials across the outer membrane.</text>
</comment>
<comment type="subunit">
    <text evidence="1">Homotrimer.</text>
</comment>
<comment type="subcellular location">
    <subcellularLocation>
        <location evidence="1">Cell outer membrane</location>
        <topology evidence="1">Multi-pass membrane protein</topology>
    </subcellularLocation>
</comment>
<comment type="domain">
    <text evidence="1">Consists of 16-stranded beta-barrel sheets, with large surface-exposed loops, that form a transmembrane pore at the center of each barrel. The pore is partially ocluded by a peptide loop that folds into the pore lumen.</text>
</comment>
<comment type="miscellaneous">
    <text evidence="1">The pore formed by Omp2a is larger than the one formed by Omp2b. Omp2b pores have optimal permeability to allow growth and protection against harmful compounds. The larger pore formed by Omp2a may be advantageous for intracellular growth, when the bacterium is competing with the host cell for nutrients whose concentration is particularly low within the phagosome.</text>
</comment>
<comment type="similarity">
    <text evidence="4">Belongs to the alphaproteobacteria porin family.</text>
</comment>
<comment type="sequence caution" evidence="4">
    <conflict type="erroneous initiation">
        <sequence resource="EMBL-CDS" id="AAA67784"/>
    </conflict>
</comment>
<comment type="sequence caution" evidence="4">
    <conflict type="erroneous initiation">
        <sequence resource="EMBL-CDS" id="AAX74032"/>
    </conflict>
</comment>
<evidence type="ECO:0000250" key="1">
    <source>
        <dbReference type="UniProtKB" id="Q44665"/>
    </source>
</evidence>
<evidence type="ECO:0000255" key="2"/>
<evidence type="ECO:0000269" key="3">
    <source>
    </source>
</evidence>
<evidence type="ECO:0000305" key="4"/>